<evidence type="ECO:0000250" key="1"/>
<evidence type="ECO:0000305" key="2"/>
<name>UGDH2_ORYSJ</name>
<protein>
    <recommendedName>
        <fullName>UDP-glucose 6-dehydrogenase 2</fullName>
        <shortName>UDP-Glc dehydrogenase 2</shortName>
        <shortName>UDP-GlcDH 2</shortName>
        <shortName>UDPGDH 2</shortName>
        <ecNumber>1.1.1.22</ecNumber>
    </recommendedName>
    <alternativeName>
        <fullName>Os-UGD2</fullName>
    </alternativeName>
</protein>
<dbReference type="EC" id="1.1.1.22"/>
<dbReference type="EMBL" id="AC109601">
    <property type="protein sequence ID" value="AAT78767.1"/>
    <property type="status" value="ALT_INIT"/>
    <property type="molecule type" value="Genomic_DNA"/>
</dbReference>
<dbReference type="EMBL" id="DP000009">
    <property type="protein sequence ID" value="ABF97514.1"/>
    <property type="status" value="ALT_INIT"/>
    <property type="molecule type" value="Genomic_DNA"/>
</dbReference>
<dbReference type="EMBL" id="AP008209">
    <property type="protein sequence ID" value="BAF12545.2"/>
    <property type="molecule type" value="Genomic_DNA"/>
</dbReference>
<dbReference type="EMBL" id="AP014959">
    <property type="protein sequence ID" value="BAS85214.1"/>
    <property type="molecule type" value="Genomic_DNA"/>
</dbReference>
<dbReference type="EMBL" id="AK241939">
    <property type="protein sequence ID" value="BAH01156.1"/>
    <property type="molecule type" value="mRNA"/>
</dbReference>
<dbReference type="RefSeq" id="XP_015629261.1">
    <property type="nucleotide sequence ID" value="XM_015773775.1"/>
</dbReference>
<dbReference type="SMR" id="B7F958"/>
<dbReference type="FunCoup" id="B7F958">
    <property type="interactions" value="1808"/>
</dbReference>
<dbReference type="STRING" id="39947.B7F958"/>
<dbReference type="PaxDb" id="39947-B7F958"/>
<dbReference type="EnsemblPlants" id="Os03t0604200-01">
    <property type="protein sequence ID" value="Os03t0604200-01"/>
    <property type="gene ID" value="Os03g0604200"/>
</dbReference>
<dbReference type="Gramene" id="Os03t0604200-01">
    <property type="protein sequence ID" value="Os03t0604200-01"/>
    <property type="gene ID" value="Os03g0604200"/>
</dbReference>
<dbReference type="KEGG" id="dosa:Os03g0604200"/>
<dbReference type="eggNOG" id="KOG2666">
    <property type="taxonomic scope" value="Eukaryota"/>
</dbReference>
<dbReference type="HOGENOM" id="CLU_023810_7_0_1"/>
<dbReference type="InParanoid" id="B7F958"/>
<dbReference type="OMA" id="EWARIAY"/>
<dbReference type="OrthoDB" id="5059218at2759"/>
<dbReference type="PlantReactome" id="R-OSA-1119574">
    <property type="pathway name" value="UDP-L-arabinose biosynthesis and transport"/>
</dbReference>
<dbReference type="UniPathway" id="UPA00038">
    <property type="reaction ID" value="UER00491"/>
</dbReference>
<dbReference type="Proteomes" id="UP000000763">
    <property type="component" value="Chromosome 3"/>
</dbReference>
<dbReference type="Proteomes" id="UP000059680">
    <property type="component" value="Chromosome 3"/>
</dbReference>
<dbReference type="GO" id="GO:0005634">
    <property type="term" value="C:nucleus"/>
    <property type="evidence" value="ECO:0000318"/>
    <property type="project" value="GO_Central"/>
</dbReference>
<dbReference type="GO" id="GO:0051287">
    <property type="term" value="F:NAD binding"/>
    <property type="evidence" value="ECO:0007669"/>
    <property type="project" value="InterPro"/>
</dbReference>
<dbReference type="GO" id="GO:0003979">
    <property type="term" value="F:UDP-glucose 6-dehydrogenase activity"/>
    <property type="evidence" value="ECO:0007669"/>
    <property type="project" value="UniProtKB-EC"/>
</dbReference>
<dbReference type="GO" id="GO:0006024">
    <property type="term" value="P:glycosaminoglycan biosynthetic process"/>
    <property type="evidence" value="ECO:0000318"/>
    <property type="project" value="GO_Central"/>
</dbReference>
<dbReference type="GO" id="GO:0006065">
    <property type="term" value="P:UDP-glucuronate biosynthetic process"/>
    <property type="evidence" value="ECO:0007669"/>
    <property type="project" value="UniProtKB-UniPathway"/>
</dbReference>
<dbReference type="FunFam" id="1.20.5.100:FF:000001">
    <property type="entry name" value="UDP-glucose 6-dehydrogenase"/>
    <property type="match status" value="1"/>
</dbReference>
<dbReference type="FunFam" id="3.40.50.720:FF:000032">
    <property type="entry name" value="UDP-glucose 6-dehydrogenase"/>
    <property type="match status" value="1"/>
</dbReference>
<dbReference type="FunFam" id="3.40.50.720:FF:000089">
    <property type="entry name" value="UDP-glucose 6-dehydrogenase"/>
    <property type="match status" value="1"/>
</dbReference>
<dbReference type="Gene3D" id="1.20.5.100">
    <property type="entry name" value="Cytochrome c1, transmembrane anchor, C-terminal"/>
    <property type="match status" value="1"/>
</dbReference>
<dbReference type="Gene3D" id="3.40.50.720">
    <property type="entry name" value="NAD(P)-binding Rossmann-like Domain"/>
    <property type="match status" value="2"/>
</dbReference>
<dbReference type="InterPro" id="IPR008927">
    <property type="entry name" value="6-PGluconate_DH-like_C_sf"/>
</dbReference>
<dbReference type="InterPro" id="IPR036291">
    <property type="entry name" value="NAD(P)-bd_dom_sf"/>
</dbReference>
<dbReference type="InterPro" id="IPR017476">
    <property type="entry name" value="UDP-Glc/GDP-Man"/>
</dbReference>
<dbReference type="InterPro" id="IPR014027">
    <property type="entry name" value="UDP-Glc/GDP-Man_DH_C"/>
</dbReference>
<dbReference type="InterPro" id="IPR036220">
    <property type="entry name" value="UDP-Glc/GDP-Man_DH_C_sf"/>
</dbReference>
<dbReference type="InterPro" id="IPR014026">
    <property type="entry name" value="UDP-Glc/GDP-Man_DH_dimer"/>
</dbReference>
<dbReference type="InterPro" id="IPR001732">
    <property type="entry name" value="UDP-Glc/GDP-Man_DH_N"/>
</dbReference>
<dbReference type="InterPro" id="IPR028356">
    <property type="entry name" value="UDPglc_DH_euk"/>
</dbReference>
<dbReference type="NCBIfam" id="TIGR03026">
    <property type="entry name" value="NDP-sugDHase"/>
    <property type="match status" value="1"/>
</dbReference>
<dbReference type="PANTHER" id="PTHR11374:SF44">
    <property type="entry name" value="UDP-GLUCOSE 6-DEHYDROGENASE 2"/>
    <property type="match status" value="1"/>
</dbReference>
<dbReference type="PANTHER" id="PTHR11374">
    <property type="entry name" value="UDP-GLUCOSE DEHYDROGENASE/UDP-MANNAC DEHYDROGENASE"/>
    <property type="match status" value="1"/>
</dbReference>
<dbReference type="Pfam" id="PF00984">
    <property type="entry name" value="UDPG_MGDP_dh"/>
    <property type="match status" value="1"/>
</dbReference>
<dbReference type="Pfam" id="PF03720">
    <property type="entry name" value="UDPG_MGDP_dh_C"/>
    <property type="match status" value="1"/>
</dbReference>
<dbReference type="Pfam" id="PF03721">
    <property type="entry name" value="UDPG_MGDP_dh_N"/>
    <property type="match status" value="1"/>
</dbReference>
<dbReference type="PIRSF" id="PIRSF500133">
    <property type="entry name" value="UDPglc_DH_euk"/>
    <property type="match status" value="1"/>
</dbReference>
<dbReference type="PIRSF" id="PIRSF000124">
    <property type="entry name" value="UDPglc_GDPman_dh"/>
    <property type="match status" value="1"/>
</dbReference>
<dbReference type="SMART" id="SM00984">
    <property type="entry name" value="UDPG_MGDP_dh_C"/>
    <property type="match status" value="1"/>
</dbReference>
<dbReference type="SUPFAM" id="SSF48179">
    <property type="entry name" value="6-phosphogluconate dehydrogenase C-terminal domain-like"/>
    <property type="match status" value="1"/>
</dbReference>
<dbReference type="SUPFAM" id="SSF51735">
    <property type="entry name" value="NAD(P)-binding Rossmann-fold domains"/>
    <property type="match status" value="1"/>
</dbReference>
<dbReference type="SUPFAM" id="SSF52413">
    <property type="entry name" value="UDP-glucose/GDP-mannose dehydrogenase C-terminal domain"/>
    <property type="match status" value="1"/>
</dbReference>
<reference key="1">
    <citation type="journal article" date="2005" name="Genome Res.">
        <title>Sequence, annotation, and analysis of synteny between rice chromosome 3 and diverged grass species.</title>
        <authorList>
            <consortium name="The rice chromosome 3 sequencing consortium"/>
            <person name="Buell C.R."/>
            <person name="Yuan Q."/>
            <person name="Ouyang S."/>
            <person name="Liu J."/>
            <person name="Zhu W."/>
            <person name="Wang A."/>
            <person name="Maiti R."/>
            <person name="Haas B."/>
            <person name="Wortman J."/>
            <person name="Pertea M."/>
            <person name="Jones K.M."/>
            <person name="Kim M."/>
            <person name="Overton L."/>
            <person name="Tsitrin T."/>
            <person name="Fadrosh D."/>
            <person name="Bera J."/>
            <person name="Weaver B."/>
            <person name="Jin S."/>
            <person name="Johri S."/>
            <person name="Reardon M."/>
            <person name="Webb K."/>
            <person name="Hill J."/>
            <person name="Moffat K."/>
            <person name="Tallon L."/>
            <person name="Van Aken S."/>
            <person name="Lewis M."/>
            <person name="Utterback T."/>
            <person name="Feldblyum T."/>
            <person name="Zismann V."/>
            <person name="Iobst S."/>
            <person name="Hsiao J."/>
            <person name="de Vazeille A.R."/>
            <person name="Salzberg S.L."/>
            <person name="White O."/>
            <person name="Fraser C.M."/>
            <person name="Yu Y."/>
            <person name="Kim H."/>
            <person name="Rambo T."/>
            <person name="Currie J."/>
            <person name="Collura K."/>
            <person name="Kernodle-Thompson S."/>
            <person name="Wei F."/>
            <person name="Kudrna K."/>
            <person name="Ammiraju J.S.S."/>
            <person name="Luo M."/>
            <person name="Goicoechea J.L."/>
            <person name="Wing R.A."/>
            <person name="Henry D."/>
            <person name="Oates R."/>
            <person name="Palmer M."/>
            <person name="Pries G."/>
            <person name="Saski C."/>
            <person name="Simmons J."/>
            <person name="Soderlund C."/>
            <person name="Nelson W."/>
            <person name="de la Bastide M."/>
            <person name="Spiegel L."/>
            <person name="Nascimento L."/>
            <person name="Huang E."/>
            <person name="Preston R."/>
            <person name="Zutavern T."/>
            <person name="Palmer L."/>
            <person name="O'Shaughnessy A."/>
            <person name="Dike S."/>
            <person name="McCombie W.R."/>
            <person name="Minx P."/>
            <person name="Cordum H."/>
            <person name="Wilson R."/>
            <person name="Jin W."/>
            <person name="Lee H.R."/>
            <person name="Jiang J."/>
            <person name="Jackson S."/>
        </authorList>
    </citation>
    <scope>NUCLEOTIDE SEQUENCE [LARGE SCALE GENOMIC DNA]</scope>
    <source>
        <strain>cv. Nipponbare</strain>
    </source>
</reference>
<reference key="2">
    <citation type="journal article" date="2005" name="Nature">
        <title>The map-based sequence of the rice genome.</title>
        <authorList>
            <consortium name="International rice genome sequencing project (IRGSP)"/>
        </authorList>
    </citation>
    <scope>NUCLEOTIDE SEQUENCE [LARGE SCALE GENOMIC DNA]</scope>
    <source>
        <strain>cv. Nipponbare</strain>
    </source>
</reference>
<reference key="3">
    <citation type="journal article" date="2008" name="Nucleic Acids Res.">
        <title>The rice annotation project database (RAP-DB): 2008 update.</title>
        <authorList>
            <consortium name="The rice annotation project (RAP)"/>
        </authorList>
    </citation>
    <scope>GENOME REANNOTATION</scope>
    <source>
        <strain>cv. Nipponbare</strain>
    </source>
</reference>
<reference key="4">
    <citation type="journal article" date="2013" name="Rice">
        <title>Improvement of the Oryza sativa Nipponbare reference genome using next generation sequence and optical map data.</title>
        <authorList>
            <person name="Kawahara Y."/>
            <person name="de la Bastide M."/>
            <person name="Hamilton J.P."/>
            <person name="Kanamori H."/>
            <person name="McCombie W.R."/>
            <person name="Ouyang S."/>
            <person name="Schwartz D.C."/>
            <person name="Tanaka T."/>
            <person name="Wu J."/>
            <person name="Zhou S."/>
            <person name="Childs K.L."/>
            <person name="Davidson R.M."/>
            <person name="Lin H."/>
            <person name="Quesada-Ocampo L."/>
            <person name="Vaillancourt B."/>
            <person name="Sakai H."/>
            <person name="Lee S.S."/>
            <person name="Kim J."/>
            <person name="Numa H."/>
            <person name="Itoh T."/>
            <person name="Buell C.R."/>
            <person name="Matsumoto T."/>
        </authorList>
    </citation>
    <scope>GENOME REANNOTATION</scope>
    <source>
        <strain>cv. Nipponbare</strain>
    </source>
</reference>
<reference key="5">
    <citation type="submission" date="2006-10" db="EMBL/GenBank/DDBJ databases">
        <title>Oryza sativa full length cDNA.</title>
        <authorList>
            <consortium name="The rice full-length cDNA consortium"/>
        </authorList>
    </citation>
    <scope>NUCLEOTIDE SEQUENCE [LARGE SCALE MRNA]</scope>
    <source>
        <strain>cv. Nipponbare</strain>
    </source>
</reference>
<reference key="6">
    <citation type="journal article" date="2007" name="J. Exp. Bot.">
        <title>Genome-wide analysis of the UDP-glucose dehydrogenase gene family in Arabidopsis, a key enzyme for matrix polysaccharides in cell walls.</title>
        <authorList>
            <person name="Klinghammer M."/>
            <person name="Tenhaken R."/>
        </authorList>
    </citation>
    <scope>GENE FAMILY</scope>
    <scope>NOMENCLATURE</scope>
</reference>
<gene>
    <name type="primary">UGD2</name>
    <name type="ordered locus">Os03g0604200</name>
    <name type="ordered locus">LOC_Os03g40720</name>
    <name type="ORF">OSJNBa0004G03.9</name>
</gene>
<comment type="function">
    <text evidence="1">Involved in the biosynthesis of UDP-glucuronic acid (UDP-GlcA), providing nucleotide sugars for cell-wall polymers.</text>
</comment>
<comment type="catalytic activity">
    <reaction>
        <text>UDP-alpha-D-glucose + 2 NAD(+) + H2O = UDP-alpha-D-glucuronate + 2 NADH + 3 H(+)</text>
        <dbReference type="Rhea" id="RHEA:23596"/>
        <dbReference type="ChEBI" id="CHEBI:15377"/>
        <dbReference type="ChEBI" id="CHEBI:15378"/>
        <dbReference type="ChEBI" id="CHEBI:57540"/>
        <dbReference type="ChEBI" id="CHEBI:57945"/>
        <dbReference type="ChEBI" id="CHEBI:58052"/>
        <dbReference type="ChEBI" id="CHEBI:58885"/>
        <dbReference type="EC" id="1.1.1.22"/>
    </reaction>
</comment>
<comment type="pathway">
    <text>Nucleotide-sugar biosynthesis; UDP-alpha-D-glucuronate biosynthesis; UDP-alpha-D-glucuronate from UDP-alpha-D-glucose: step 1/1.</text>
</comment>
<comment type="similarity">
    <text evidence="2">Belongs to the UDP-glucose/GDP-mannose dehydrogenase family.</text>
</comment>
<comment type="sequence caution" evidence="2">
    <conflict type="erroneous initiation">
        <sequence resource="EMBL-CDS" id="AAT78767"/>
    </conflict>
    <text>Truncated N-terminus.</text>
</comment>
<comment type="sequence caution" evidence="2">
    <conflict type="erroneous initiation">
        <sequence resource="EMBL-CDS" id="ABF97514"/>
    </conflict>
    <text>Truncated N-terminus.</text>
</comment>
<feature type="chain" id="PRO_0000422267" description="UDP-glucose 6-dehydrogenase 2">
    <location>
        <begin position="1"/>
        <end position="482"/>
    </location>
</feature>
<feature type="active site" description="Nucleophile" evidence="1">
    <location>
        <position position="274"/>
    </location>
</feature>
<feature type="binding site" evidence="1">
    <location>
        <begin position="8"/>
        <end position="13"/>
    </location>
    <ligand>
        <name>NAD(+)</name>
        <dbReference type="ChEBI" id="CHEBI:57540"/>
    </ligand>
</feature>
<feature type="binding site" evidence="1">
    <location>
        <position position="33"/>
    </location>
    <ligand>
        <name>NAD(+)</name>
        <dbReference type="ChEBI" id="CHEBI:57540"/>
    </ligand>
</feature>
<feature type="binding site" evidence="1">
    <location>
        <position position="38"/>
    </location>
    <ligand>
        <name>NAD(+)</name>
        <dbReference type="ChEBI" id="CHEBI:57540"/>
    </ligand>
</feature>
<feature type="binding site" evidence="1">
    <location>
        <begin position="86"/>
        <end position="90"/>
    </location>
    <ligand>
        <name>NAD(+)</name>
        <dbReference type="ChEBI" id="CHEBI:57540"/>
    </ligand>
</feature>
<feature type="binding site" evidence="1">
    <location>
        <begin position="127"/>
        <end position="128"/>
    </location>
    <ligand>
        <name>NAD(+)</name>
        <dbReference type="ChEBI" id="CHEBI:57540"/>
    </ligand>
</feature>
<feature type="binding site" evidence="1">
    <location>
        <begin position="159"/>
        <end position="163"/>
    </location>
    <ligand>
        <name>substrate</name>
    </ligand>
</feature>
<feature type="binding site" evidence="1">
    <location>
        <position position="163"/>
    </location>
    <ligand>
        <name>NAD(+)</name>
        <dbReference type="ChEBI" id="CHEBI:57540"/>
    </ligand>
</feature>
<feature type="binding site" evidence="1">
    <location>
        <begin position="218"/>
        <end position="225"/>
    </location>
    <ligand>
        <name>substrate</name>
    </ligand>
</feature>
<feature type="binding site" evidence="1">
    <location>
        <begin position="258"/>
        <end position="271"/>
    </location>
    <ligand>
        <name>substrate</name>
    </ligand>
</feature>
<feature type="binding site" evidence="1">
    <location>
        <begin position="274"/>
        <end position="277"/>
    </location>
    <ligand>
        <name>NAD(+)</name>
        <dbReference type="ChEBI" id="CHEBI:57540"/>
    </ligand>
</feature>
<feature type="binding site" evidence="1">
    <location>
        <begin position="336"/>
        <end position="337"/>
    </location>
    <ligand>
        <name>substrate</name>
    </ligand>
</feature>
<feature type="binding site" evidence="1">
    <location>
        <position position="344"/>
    </location>
    <ligand>
        <name>NAD(+)</name>
        <dbReference type="ChEBI" id="CHEBI:57540"/>
    </ligand>
</feature>
<feature type="binding site" evidence="1">
    <location>
        <position position="449"/>
    </location>
    <ligand>
        <name>substrate</name>
    </ligand>
</feature>
<feature type="modified residue" description="Phosphoserine" evidence="1">
    <location>
        <position position="395"/>
    </location>
</feature>
<proteinExistence type="evidence at transcript level"/>
<sequence>MVKICCIGAGYVGGPTMAVIALKCPDVEVVVVDISAPRIEGWNSERLPIYEPGLDDVVRQCRGRNLFFSTDVERHVADAGIVFVSVNTPTKTRGLGAGKAADLTYWESAARIIADVSRSDKIVVEKSTVPVKTAEAIEKILAHNSKGGNIRYQILSNPEFLAEGTAIQDLFSPDRVLIGGRETPEGRAAVAALKSIYARWVPDDRIITTNLWSAELSKLAANAFLAQRISSVNAISALCEATGADVTEVANSIGKDSRIGPRFLSASVGFGGSCFQKDILNLVYICECYGLPEVANYWHQVIRINDYQKSRFVNRVVSSMFNTVAGKKVAVLGFAFKKDTGDTRETPAIDVCKGLVGDKAVVSIYDPQVTEEQVQRDLVMNKFDWDHPRHLQPMSPSSAKHVAVSWDAYEAARGAHAVCILTEWDEFRRLDYQRMYDAMHKPAFLFDGRNVVDPDKLRRIGFVVYSIGKPLDHWLRDMPAVA</sequence>
<accession>B7F958</accession>
<accession>A0A0P0W012</accession>
<accession>Q6AUY0</accession>
<organism>
    <name type="scientific">Oryza sativa subsp. japonica</name>
    <name type="common">Rice</name>
    <dbReference type="NCBI Taxonomy" id="39947"/>
    <lineage>
        <taxon>Eukaryota</taxon>
        <taxon>Viridiplantae</taxon>
        <taxon>Streptophyta</taxon>
        <taxon>Embryophyta</taxon>
        <taxon>Tracheophyta</taxon>
        <taxon>Spermatophyta</taxon>
        <taxon>Magnoliopsida</taxon>
        <taxon>Liliopsida</taxon>
        <taxon>Poales</taxon>
        <taxon>Poaceae</taxon>
        <taxon>BOP clade</taxon>
        <taxon>Oryzoideae</taxon>
        <taxon>Oryzeae</taxon>
        <taxon>Oryzinae</taxon>
        <taxon>Oryza</taxon>
        <taxon>Oryza sativa</taxon>
    </lineage>
</organism>
<keyword id="KW-0520">NAD</keyword>
<keyword id="KW-0560">Oxidoreductase</keyword>
<keyword id="KW-0597">Phosphoprotein</keyword>
<keyword id="KW-1185">Reference proteome</keyword>